<name>PSAB_GRATL</name>
<protein>
    <recommendedName>
        <fullName evidence="1">Photosystem I P700 chlorophyll a apoprotein A2</fullName>
        <ecNumber evidence="1">1.97.1.12</ecNumber>
    </recommendedName>
    <alternativeName>
        <fullName evidence="1">PSI-B</fullName>
    </alternativeName>
    <alternativeName>
        <fullName evidence="1">PsaB</fullName>
    </alternativeName>
</protein>
<comment type="function">
    <text evidence="1">PsaA and PsaB bind P700, the primary electron donor of photosystem I (PSI), as well as the electron acceptors A0, A1 and FX. PSI is a plastocyanin/cytochrome c6-ferredoxin oxidoreductase, converting photonic excitation into a charge separation, which transfers an electron from the donor P700 chlorophyll pair to the spectroscopically characterized acceptors A0, A1, FX, FA and FB in turn. Oxidized P700 is reduced on the lumenal side of the thylakoid membrane by plastocyanin or cytochrome c6.</text>
</comment>
<comment type="catalytic activity">
    <reaction evidence="1">
        <text>reduced [plastocyanin] + hnu + oxidized [2Fe-2S]-[ferredoxin] = oxidized [plastocyanin] + reduced [2Fe-2S]-[ferredoxin]</text>
        <dbReference type="Rhea" id="RHEA:30407"/>
        <dbReference type="Rhea" id="RHEA-COMP:10000"/>
        <dbReference type="Rhea" id="RHEA-COMP:10001"/>
        <dbReference type="Rhea" id="RHEA-COMP:10039"/>
        <dbReference type="Rhea" id="RHEA-COMP:10040"/>
        <dbReference type="ChEBI" id="CHEBI:29036"/>
        <dbReference type="ChEBI" id="CHEBI:30212"/>
        <dbReference type="ChEBI" id="CHEBI:33737"/>
        <dbReference type="ChEBI" id="CHEBI:33738"/>
        <dbReference type="ChEBI" id="CHEBI:49552"/>
        <dbReference type="EC" id="1.97.1.12"/>
    </reaction>
</comment>
<comment type="cofactor">
    <text evidence="1">P700 is a chlorophyll a/chlorophyll a' dimer, A0 is one or more chlorophyll a, A1 is one or both phylloquinones and FX is a shared 4Fe-4S iron-sulfur center.</text>
</comment>
<comment type="subunit">
    <text evidence="1">The PsaA/B heterodimer binds the P700 chlorophyll special pair and subsequent electron acceptors. PSI consists of a core antenna complex that captures photons, and an electron transfer chain that converts photonic excitation into a charge separation. The eukaryotic PSI reaction center is composed of at least 11 subunits.</text>
</comment>
<comment type="subcellular location">
    <subcellularLocation>
        <location evidence="1">Plastid</location>
        <location evidence="1">Chloroplast thylakoid membrane</location>
        <topology evidence="1">Multi-pass membrane protein</topology>
    </subcellularLocation>
</comment>
<comment type="similarity">
    <text evidence="1">Belongs to the PsaA/PsaB family.</text>
</comment>
<keyword id="KW-0004">4Fe-4S</keyword>
<keyword id="KW-0148">Chlorophyll</keyword>
<keyword id="KW-0150">Chloroplast</keyword>
<keyword id="KW-0157">Chromophore</keyword>
<keyword id="KW-0249">Electron transport</keyword>
<keyword id="KW-0408">Iron</keyword>
<keyword id="KW-0411">Iron-sulfur</keyword>
<keyword id="KW-0460">Magnesium</keyword>
<keyword id="KW-0472">Membrane</keyword>
<keyword id="KW-0479">Metal-binding</keyword>
<keyword id="KW-0560">Oxidoreductase</keyword>
<keyword id="KW-0602">Photosynthesis</keyword>
<keyword id="KW-0603">Photosystem I</keyword>
<keyword id="KW-0934">Plastid</keyword>
<keyword id="KW-0793">Thylakoid</keyword>
<keyword id="KW-0812">Transmembrane</keyword>
<keyword id="KW-1133">Transmembrane helix</keyword>
<keyword id="KW-0813">Transport</keyword>
<feature type="chain" id="PRO_0000088615" description="Photosystem I P700 chlorophyll a apoprotein A2">
    <location>
        <begin position="1"/>
        <end position="734"/>
    </location>
</feature>
<feature type="transmembrane region" description="Helical; Name=I" evidence="1">
    <location>
        <begin position="46"/>
        <end position="69"/>
    </location>
</feature>
<feature type="transmembrane region" description="Helical; Name=II" evidence="1">
    <location>
        <begin position="135"/>
        <end position="158"/>
    </location>
</feature>
<feature type="transmembrane region" description="Helical; Name=III" evidence="1">
    <location>
        <begin position="175"/>
        <end position="199"/>
    </location>
</feature>
<feature type="transmembrane region" description="Helical; Name=IV" evidence="1">
    <location>
        <begin position="273"/>
        <end position="291"/>
    </location>
</feature>
<feature type="transmembrane region" description="Helical; Name=V" evidence="1">
    <location>
        <begin position="330"/>
        <end position="353"/>
    </location>
</feature>
<feature type="transmembrane region" description="Helical; Name=VI" evidence="1">
    <location>
        <begin position="369"/>
        <end position="395"/>
    </location>
</feature>
<feature type="transmembrane region" description="Helical; Name=VII" evidence="1">
    <location>
        <begin position="417"/>
        <end position="439"/>
    </location>
</feature>
<feature type="transmembrane region" description="Helical; Name=VIII" evidence="1">
    <location>
        <begin position="517"/>
        <end position="535"/>
    </location>
</feature>
<feature type="transmembrane region" description="Helical; Name=IX" evidence="1">
    <location>
        <begin position="575"/>
        <end position="596"/>
    </location>
</feature>
<feature type="transmembrane region" description="Helical; Name=X" evidence="1">
    <location>
        <begin position="643"/>
        <end position="665"/>
    </location>
</feature>
<feature type="transmembrane region" description="Helical; Name=XI" evidence="1">
    <location>
        <begin position="707"/>
        <end position="727"/>
    </location>
</feature>
<feature type="binding site" evidence="1">
    <location>
        <position position="559"/>
    </location>
    <ligand>
        <name>[4Fe-4S] cluster</name>
        <dbReference type="ChEBI" id="CHEBI:49883"/>
        <note>ligand shared between dimeric partners</note>
    </ligand>
</feature>
<feature type="binding site" evidence="1">
    <location>
        <position position="568"/>
    </location>
    <ligand>
        <name>[4Fe-4S] cluster</name>
        <dbReference type="ChEBI" id="CHEBI:49883"/>
        <note>ligand shared between dimeric partners</note>
    </ligand>
</feature>
<feature type="binding site" description="axial binding residue" evidence="1">
    <location>
        <position position="654"/>
    </location>
    <ligand>
        <name>chlorophyll a</name>
        <dbReference type="ChEBI" id="CHEBI:58416"/>
        <label>B1</label>
    </ligand>
    <ligandPart>
        <name>Mg</name>
        <dbReference type="ChEBI" id="CHEBI:25107"/>
    </ligandPart>
</feature>
<feature type="binding site" description="axial binding residue" evidence="1">
    <location>
        <position position="662"/>
    </location>
    <ligand>
        <name>chlorophyll a</name>
        <dbReference type="ChEBI" id="CHEBI:58416"/>
        <label>B3</label>
    </ligand>
    <ligandPart>
        <name>Mg</name>
        <dbReference type="ChEBI" id="CHEBI:25107"/>
    </ligandPart>
</feature>
<feature type="binding site" evidence="1">
    <location>
        <position position="670"/>
    </location>
    <ligand>
        <name>chlorophyll a</name>
        <dbReference type="ChEBI" id="CHEBI:58416"/>
        <label>B3</label>
    </ligand>
</feature>
<feature type="binding site" evidence="1">
    <location>
        <position position="671"/>
    </location>
    <ligand>
        <name>phylloquinone</name>
        <dbReference type="ChEBI" id="CHEBI:18067"/>
        <label>B</label>
    </ligand>
</feature>
<evidence type="ECO:0000255" key="1">
    <source>
        <dbReference type="HAMAP-Rule" id="MF_00482"/>
    </source>
</evidence>
<dbReference type="EC" id="1.97.1.12" evidence="1"/>
<dbReference type="EMBL" id="AY673996">
    <property type="protein sequence ID" value="AAT79688.1"/>
    <property type="molecule type" value="Genomic_DNA"/>
</dbReference>
<dbReference type="RefSeq" id="YP_063613.1">
    <property type="nucleotide sequence ID" value="NC_006137.1"/>
</dbReference>
<dbReference type="SMR" id="Q6B8U7"/>
<dbReference type="GeneID" id="2943943"/>
<dbReference type="GO" id="GO:0009535">
    <property type="term" value="C:chloroplast thylakoid membrane"/>
    <property type="evidence" value="ECO:0007669"/>
    <property type="project" value="UniProtKB-SubCell"/>
</dbReference>
<dbReference type="GO" id="GO:0009522">
    <property type="term" value="C:photosystem I"/>
    <property type="evidence" value="ECO:0007669"/>
    <property type="project" value="UniProtKB-KW"/>
</dbReference>
<dbReference type="GO" id="GO:0051539">
    <property type="term" value="F:4 iron, 4 sulfur cluster binding"/>
    <property type="evidence" value="ECO:0007669"/>
    <property type="project" value="UniProtKB-KW"/>
</dbReference>
<dbReference type="GO" id="GO:0016168">
    <property type="term" value="F:chlorophyll binding"/>
    <property type="evidence" value="ECO:0007669"/>
    <property type="project" value="UniProtKB-KW"/>
</dbReference>
<dbReference type="GO" id="GO:0009055">
    <property type="term" value="F:electron transfer activity"/>
    <property type="evidence" value="ECO:0007669"/>
    <property type="project" value="UniProtKB-UniRule"/>
</dbReference>
<dbReference type="GO" id="GO:0000287">
    <property type="term" value="F:magnesium ion binding"/>
    <property type="evidence" value="ECO:0007669"/>
    <property type="project" value="UniProtKB-UniRule"/>
</dbReference>
<dbReference type="GO" id="GO:0016491">
    <property type="term" value="F:oxidoreductase activity"/>
    <property type="evidence" value="ECO:0007669"/>
    <property type="project" value="UniProtKB-KW"/>
</dbReference>
<dbReference type="GO" id="GO:0015979">
    <property type="term" value="P:photosynthesis"/>
    <property type="evidence" value="ECO:0007669"/>
    <property type="project" value="UniProtKB-UniRule"/>
</dbReference>
<dbReference type="FunFam" id="1.20.1130.10:FF:000001">
    <property type="entry name" value="Photosystem I P700 chlorophyll a apoprotein A2"/>
    <property type="match status" value="1"/>
</dbReference>
<dbReference type="Gene3D" id="1.20.1130.10">
    <property type="entry name" value="Photosystem I PsaA/PsaB"/>
    <property type="match status" value="1"/>
</dbReference>
<dbReference type="HAMAP" id="MF_00482">
    <property type="entry name" value="PSI_PsaB"/>
    <property type="match status" value="1"/>
</dbReference>
<dbReference type="InterPro" id="IPR001280">
    <property type="entry name" value="PSI_PsaA/B"/>
</dbReference>
<dbReference type="InterPro" id="IPR020586">
    <property type="entry name" value="PSI_PsaA/B_CS"/>
</dbReference>
<dbReference type="InterPro" id="IPR036408">
    <property type="entry name" value="PSI_PsaA/B_sf"/>
</dbReference>
<dbReference type="InterPro" id="IPR006244">
    <property type="entry name" value="PSI_PsaB"/>
</dbReference>
<dbReference type="NCBIfam" id="TIGR01336">
    <property type="entry name" value="psaB"/>
    <property type="match status" value="1"/>
</dbReference>
<dbReference type="PANTHER" id="PTHR30128">
    <property type="entry name" value="OUTER MEMBRANE PROTEIN, OMPA-RELATED"/>
    <property type="match status" value="1"/>
</dbReference>
<dbReference type="PANTHER" id="PTHR30128:SF19">
    <property type="entry name" value="PHOTOSYSTEM I P700 CHLOROPHYLL A APOPROTEIN A1-RELATED"/>
    <property type="match status" value="1"/>
</dbReference>
<dbReference type="Pfam" id="PF00223">
    <property type="entry name" value="PsaA_PsaB"/>
    <property type="match status" value="1"/>
</dbReference>
<dbReference type="PIRSF" id="PIRSF002905">
    <property type="entry name" value="PSI_A"/>
    <property type="match status" value="1"/>
</dbReference>
<dbReference type="PRINTS" id="PR00257">
    <property type="entry name" value="PHOTSYSPSAAB"/>
</dbReference>
<dbReference type="SUPFAM" id="SSF81558">
    <property type="entry name" value="Photosystem I subunits PsaA/PsaB"/>
    <property type="match status" value="1"/>
</dbReference>
<dbReference type="PROSITE" id="PS00419">
    <property type="entry name" value="PHOTOSYSTEM_I_PSAAB"/>
    <property type="match status" value="1"/>
</dbReference>
<sequence>MATKFPKFSQALAQDPTTRRIWYGIATAHDFESHDGMTEENLYQKIFSSHFGHIAIIFLWTSGNLFHVAWQGNFEQWVAQPMKIKPIAHAIWDPHFGQPAVKAFTKGGASYPVDITFSGVYHWWYTIGMRTNNDLYNGSLFLLILSAIMLFAGWLHLQPKFKPGLSWFKNNESRLNHHLSGLFGLSSLAWTGHLIHVAIPESRGQHVGWDNFTYTLPHPAGLQPFFTGNWSVYASDPDTSNHIFGTSQGAGTAILTFLGGFHPQSQSLWLTDMAHHHLAIAIVFIIAGHMYKTNWGIGHNIKDILDAHRPPSGRLGKGHKGLYATITNSLHMQLGLALASLGVITSLVAQHMYAMPPYAFMAKDFTTQAALYTHHQYIAGFLMVGAFAHGAIFFIRDYDPEENKNNVLFRMLDHKEAIISHLSWVSLFLGFHTLGLYIHNDTMIAFGTPEKQILIEPVFAQWIQASSGKALYGFNTLLSSSSSIATKAGSSVWLPGWLEAINSNKNSLFLAIGPGDFLVHHAIALGLHTTTLILVKGALDARGSKLMPDKKDFGYSFPCDGPGRGGTCDISAWDAFYLSVFWMLNTIGWVTFYWHWKHMTIWQGNVNQFNESSTYLMGWLRDYLWLNSSPLINGYNPYGMNNLSVWAWMFLFGHLVWATGFMFLISWRGYWQELIETLAWAHERTPLANLVRWKDKPVALSIVQARLVGLVHFSVGYILTYAAFVIASTSGKFG</sequence>
<geneLocation type="chloroplast"/>
<gene>
    <name evidence="1" type="primary">psaB</name>
    <name type="ordered locus">Grc000107</name>
</gene>
<organism>
    <name type="scientific">Gracilaria tenuistipitata var. liui</name>
    <name type="common">Red alga</name>
    <dbReference type="NCBI Taxonomy" id="285951"/>
    <lineage>
        <taxon>Eukaryota</taxon>
        <taxon>Rhodophyta</taxon>
        <taxon>Florideophyceae</taxon>
        <taxon>Rhodymeniophycidae</taxon>
        <taxon>Gracilariales</taxon>
        <taxon>Gracilariaceae</taxon>
        <taxon>Gracilaria</taxon>
        <taxon>Gracilaria tenuistipitata</taxon>
    </lineage>
</organism>
<accession>Q6B8U7</accession>
<reference key="1">
    <citation type="journal article" date="2004" name="J. Mol. Evol.">
        <title>Comparative analysis of the complete plastid genome sequence of the red alga Gracilaria tenuistipitata var. liui provides insights into the evolution of rhodoplasts and their relationship to other plastids.</title>
        <authorList>
            <person name="Hagopian J.C."/>
            <person name="Reis M."/>
            <person name="Kitajima J.P."/>
            <person name="Bhattacharya D."/>
            <person name="de Oliveira M.C."/>
        </authorList>
    </citation>
    <scope>NUCLEOTIDE SEQUENCE [LARGE SCALE GENOMIC DNA]</scope>
</reference>
<proteinExistence type="inferred from homology"/>